<sequence>MKVTLIAILTCAAVLVLHTTAAEELEAESQLMEVGMPDTELAAVDEERLVECSVSCEIEKEGNKDCKKKKCKGGWKCKFNMCVKV</sequence>
<accession>D2Y223</accession>
<feature type="signal peptide" evidence="2">
    <location>
        <begin position="1"/>
        <end position="22"/>
    </location>
</feature>
<feature type="propeptide" id="PRO_0000400791" evidence="1">
    <location>
        <begin position="23"/>
        <end position="48"/>
    </location>
</feature>
<feature type="peptide" id="PRO_0000400792" description="U4-theraphotoxin-Hhn1d">
    <location>
        <begin position="49"/>
        <end position="85"/>
    </location>
</feature>
<feature type="disulfide bond" evidence="1">
    <location>
        <begin position="52"/>
        <end position="66"/>
    </location>
</feature>
<feature type="disulfide bond" evidence="1">
    <location>
        <begin position="56"/>
        <end position="77"/>
    </location>
</feature>
<feature type="disulfide bond" evidence="1">
    <location>
        <begin position="71"/>
        <end position="82"/>
    </location>
</feature>
<keyword id="KW-1015">Disulfide bond</keyword>
<keyword id="KW-0528">Neurotoxin</keyword>
<keyword id="KW-0629">Postsynaptic neurotoxin</keyword>
<keyword id="KW-0964">Secreted</keyword>
<keyword id="KW-0732">Signal</keyword>
<keyword id="KW-0800">Toxin</keyword>
<organism>
    <name type="scientific">Cyriopagopus hainanus</name>
    <name type="common">Chinese bird spider</name>
    <name type="synonym">Haplopelma hainanum</name>
    <dbReference type="NCBI Taxonomy" id="209901"/>
    <lineage>
        <taxon>Eukaryota</taxon>
        <taxon>Metazoa</taxon>
        <taxon>Ecdysozoa</taxon>
        <taxon>Arthropoda</taxon>
        <taxon>Chelicerata</taxon>
        <taxon>Arachnida</taxon>
        <taxon>Araneae</taxon>
        <taxon>Mygalomorphae</taxon>
        <taxon>Theraphosidae</taxon>
        <taxon>Haplopelma</taxon>
    </lineage>
</organism>
<reference key="1">
    <citation type="journal article" date="2010" name="J. Proteome Res.">
        <title>Molecular diversification of peptide toxins from the tarantula Haplopelma hainanum (Ornithoctonus hainana) venom based on transcriptomic, peptidomic, and genomic analyses.</title>
        <authorList>
            <person name="Tang X."/>
            <person name="Zhang Y."/>
            <person name="Hu W."/>
            <person name="Xu D."/>
            <person name="Tao H."/>
            <person name="Yang X."/>
            <person name="Li Y."/>
            <person name="Jiang L."/>
            <person name="Liang S."/>
        </authorList>
    </citation>
    <scope>NUCLEOTIDE SEQUENCE [LARGE SCALE MRNA]</scope>
    <source>
        <tissue>Venom gland</tissue>
    </source>
</reference>
<name>H2L01_CYRHA</name>
<dbReference type="EMBL" id="GU292900">
    <property type="protein sequence ID" value="ADB56716.1"/>
    <property type="molecule type" value="mRNA"/>
</dbReference>
<dbReference type="SMR" id="D2Y223"/>
<dbReference type="ArachnoServer" id="AS001587">
    <property type="toxin name" value="U4-theraphotoxin-Hhn1d"/>
</dbReference>
<dbReference type="GO" id="GO:0005576">
    <property type="term" value="C:extracellular region"/>
    <property type="evidence" value="ECO:0007669"/>
    <property type="project" value="UniProtKB-SubCell"/>
</dbReference>
<dbReference type="GO" id="GO:0035792">
    <property type="term" value="C:host cell postsynaptic membrane"/>
    <property type="evidence" value="ECO:0007669"/>
    <property type="project" value="UniProtKB-KW"/>
</dbReference>
<dbReference type="GO" id="GO:0090729">
    <property type="term" value="F:toxin activity"/>
    <property type="evidence" value="ECO:0007669"/>
    <property type="project" value="UniProtKB-KW"/>
</dbReference>
<dbReference type="InterPro" id="IPR012625">
    <property type="entry name" value="Hwtx-2-like"/>
</dbReference>
<dbReference type="Pfam" id="PF08089">
    <property type="entry name" value="Toxin_20"/>
    <property type="match status" value="1"/>
</dbReference>
<dbReference type="SUPFAM" id="SSF57059">
    <property type="entry name" value="omega toxin-like"/>
    <property type="match status" value="1"/>
</dbReference>
<dbReference type="PROSITE" id="PS60022">
    <property type="entry name" value="HWTX_2"/>
    <property type="match status" value="1"/>
</dbReference>
<proteinExistence type="evidence at transcript level"/>
<evidence type="ECO:0000250" key="1"/>
<evidence type="ECO:0000255" key="2"/>
<evidence type="ECO:0000305" key="3"/>
<protein>
    <recommendedName>
        <fullName>U4-theraphotoxin-Hhn1d</fullName>
        <shortName>U4-TRTX-Hhn1d</shortName>
    </recommendedName>
    <alternativeName>
        <fullName>Hainantoxin-II-12</fullName>
        <shortName>HNTX-II-12</shortName>
    </alternativeName>
</protein>
<comment type="function">
    <text evidence="1">Postsynaptic neurotoxin.</text>
</comment>
<comment type="subcellular location">
    <subcellularLocation>
        <location evidence="1">Secreted</location>
    </subcellularLocation>
</comment>
<comment type="tissue specificity">
    <text>Expressed by the venom gland.</text>
</comment>
<comment type="similarity">
    <text evidence="3">Belongs to the neurotoxin 12 (Hwtx-2) family. 02 (Hwtx-2) subfamily.</text>
</comment>